<dbReference type="EC" id="2.7.7.6" evidence="1"/>
<dbReference type="EMBL" id="AE010299">
    <property type="protein sequence ID" value="AAM05180.1"/>
    <property type="molecule type" value="Genomic_DNA"/>
</dbReference>
<dbReference type="SMR" id="P61933"/>
<dbReference type="STRING" id="188937.MA_4672"/>
<dbReference type="EnsemblBacteria" id="AAM05180">
    <property type="protein sequence ID" value="AAM05180"/>
    <property type="gene ID" value="MA_4672"/>
</dbReference>
<dbReference type="KEGG" id="mac:MA_4672"/>
<dbReference type="HOGENOM" id="CLU_179456_2_1_2"/>
<dbReference type="InParanoid" id="P61933"/>
<dbReference type="OrthoDB" id="129238at2157"/>
<dbReference type="PhylomeDB" id="P61933"/>
<dbReference type="Proteomes" id="UP000002487">
    <property type="component" value="Chromosome"/>
</dbReference>
<dbReference type="GO" id="GO:0005737">
    <property type="term" value="C:cytoplasm"/>
    <property type="evidence" value="ECO:0007669"/>
    <property type="project" value="UniProtKB-SubCell"/>
</dbReference>
<dbReference type="GO" id="GO:0000428">
    <property type="term" value="C:DNA-directed RNA polymerase complex"/>
    <property type="evidence" value="ECO:0007669"/>
    <property type="project" value="UniProtKB-KW"/>
</dbReference>
<dbReference type="GO" id="GO:0003677">
    <property type="term" value="F:DNA binding"/>
    <property type="evidence" value="ECO:0007669"/>
    <property type="project" value="InterPro"/>
</dbReference>
<dbReference type="GO" id="GO:0003899">
    <property type="term" value="F:DNA-directed RNA polymerase activity"/>
    <property type="evidence" value="ECO:0007669"/>
    <property type="project" value="UniProtKB-UniRule"/>
</dbReference>
<dbReference type="GO" id="GO:0008270">
    <property type="term" value="F:zinc ion binding"/>
    <property type="evidence" value="ECO:0007669"/>
    <property type="project" value="UniProtKB-UniRule"/>
</dbReference>
<dbReference type="GO" id="GO:0006351">
    <property type="term" value="P:DNA-templated transcription"/>
    <property type="evidence" value="ECO:0007669"/>
    <property type="project" value="UniProtKB-UniRule"/>
</dbReference>
<dbReference type="Gene3D" id="2.20.28.30">
    <property type="entry name" value="RNA polymerase ii, chain L"/>
    <property type="match status" value="1"/>
</dbReference>
<dbReference type="HAMAP" id="MF_00615">
    <property type="entry name" value="RNApol_arch_Rpo12"/>
    <property type="match status" value="1"/>
</dbReference>
<dbReference type="InterPro" id="IPR006591">
    <property type="entry name" value="RNAP_P/RPABC4"/>
</dbReference>
<dbReference type="InterPro" id="IPR029040">
    <property type="entry name" value="RPABC4/Spt4"/>
</dbReference>
<dbReference type="InterPro" id="IPR023464">
    <property type="entry name" value="Rpo12"/>
</dbReference>
<dbReference type="NCBIfam" id="NF001606">
    <property type="entry name" value="PRK00398.1-3"/>
    <property type="match status" value="1"/>
</dbReference>
<dbReference type="Pfam" id="PF03604">
    <property type="entry name" value="Zn_ribbon_RPAB4"/>
    <property type="match status" value="1"/>
</dbReference>
<dbReference type="SMART" id="SM00659">
    <property type="entry name" value="RPOLCX"/>
    <property type="match status" value="1"/>
</dbReference>
<dbReference type="SUPFAM" id="SSF63393">
    <property type="entry name" value="RNA polymerase subunits"/>
    <property type="match status" value="1"/>
</dbReference>
<proteinExistence type="inferred from homology"/>
<name>RPO12_METAC</name>
<accession>P61933</accession>
<accession>Q8TPX9</accession>
<sequence>MGYKCTRCKQKVEIDYEYTGIRCPYCGHRILVKERPTTIKRIKAE</sequence>
<comment type="function">
    <text evidence="1">DNA-dependent RNA polymerase (RNAP) catalyzes the transcription of DNA into RNA using the four ribonucleoside triphosphates as substrates.</text>
</comment>
<comment type="catalytic activity">
    <reaction evidence="1">
        <text>RNA(n) + a ribonucleoside 5'-triphosphate = RNA(n+1) + diphosphate</text>
        <dbReference type="Rhea" id="RHEA:21248"/>
        <dbReference type="Rhea" id="RHEA-COMP:14527"/>
        <dbReference type="Rhea" id="RHEA-COMP:17342"/>
        <dbReference type="ChEBI" id="CHEBI:33019"/>
        <dbReference type="ChEBI" id="CHEBI:61557"/>
        <dbReference type="ChEBI" id="CHEBI:140395"/>
        <dbReference type="EC" id="2.7.7.6"/>
    </reaction>
</comment>
<comment type="cofactor">
    <cofactor evidence="1">
        <name>Zn(2+)</name>
        <dbReference type="ChEBI" id="CHEBI:29105"/>
    </cofactor>
    <text evidence="1">Binds 1 zinc ion.</text>
</comment>
<comment type="subunit">
    <text evidence="1">Part of the RNA polymerase complex.</text>
</comment>
<comment type="subcellular location">
    <subcellularLocation>
        <location evidence="1">Cytoplasm</location>
    </subcellularLocation>
</comment>
<comment type="similarity">
    <text evidence="1">Belongs to the archaeal Rpo12/eukaryotic RPC10 RNA polymerase subunit family.</text>
</comment>
<protein>
    <recommendedName>
        <fullName evidence="1">DNA-directed RNA polymerase subunit Rpo12</fullName>
        <ecNumber evidence="1">2.7.7.6</ecNumber>
    </recommendedName>
    <alternativeName>
        <fullName evidence="1">DNA-directed RNA polymerase subunit P</fullName>
    </alternativeName>
</protein>
<organism>
    <name type="scientific">Methanosarcina acetivorans (strain ATCC 35395 / DSM 2834 / JCM 12185 / C2A)</name>
    <dbReference type="NCBI Taxonomy" id="188937"/>
    <lineage>
        <taxon>Archaea</taxon>
        <taxon>Methanobacteriati</taxon>
        <taxon>Methanobacteriota</taxon>
        <taxon>Stenosarchaea group</taxon>
        <taxon>Methanomicrobia</taxon>
        <taxon>Methanosarcinales</taxon>
        <taxon>Methanosarcinaceae</taxon>
        <taxon>Methanosarcina</taxon>
    </lineage>
</organism>
<gene>
    <name evidence="1" type="primary">rpo12</name>
    <name evidence="1" type="synonym">rpoP</name>
    <name type="ordered locus">MA_4672</name>
</gene>
<keyword id="KW-0963">Cytoplasm</keyword>
<keyword id="KW-0240">DNA-directed RNA polymerase</keyword>
<keyword id="KW-0479">Metal-binding</keyword>
<keyword id="KW-0548">Nucleotidyltransferase</keyword>
<keyword id="KW-1185">Reference proteome</keyword>
<keyword id="KW-0804">Transcription</keyword>
<keyword id="KW-0808">Transferase</keyword>
<keyword id="KW-0862">Zinc</keyword>
<feature type="chain" id="PRO_0000159757" description="DNA-directed RNA polymerase subunit Rpo12">
    <location>
        <begin position="1"/>
        <end position="45"/>
    </location>
</feature>
<feature type="binding site" evidence="1">
    <location>
        <position position="8"/>
    </location>
    <ligand>
        <name>Zn(2+)</name>
        <dbReference type="ChEBI" id="CHEBI:29105"/>
    </ligand>
</feature>
<feature type="binding site" evidence="1">
    <location>
        <position position="23"/>
    </location>
    <ligand>
        <name>Zn(2+)</name>
        <dbReference type="ChEBI" id="CHEBI:29105"/>
    </ligand>
</feature>
<feature type="binding site" evidence="1">
    <location>
        <position position="26"/>
    </location>
    <ligand>
        <name>Zn(2+)</name>
        <dbReference type="ChEBI" id="CHEBI:29105"/>
    </ligand>
</feature>
<evidence type="ECO:0000255" key="1">
    <source>
        <dbReference type="HAMAP-Rule" id="MF_00615"/>
    </source>
</evidence>
<reference key="1">
    <citation type="journal article" date="2002" name="Genome Res.">
        <title>The genome of Methanosarcina acetivorans reveals extensive metabolic and physiological diversity.</title>
        <authorList>
            <person name="Galagan J.E."/>
            <person name="Nusbaum C."/>
            <person name="Roy A."/>
            <person name="Endrizzi M.G."/>
            <person name="Macdonald P."/>
            <person name="FitzHugh W."/>
            <person name="Calvo S."/>
            <person name="Engels R."/>
            <person name="Smirnov S."/>
            <person name="Atnoor D."/>
            <person name="Brown A."/>
            <person name="Allen N."/>
            <person name="Naylor J."/>
            <person name="Stange-Thomann N."/>
            <person name="DeArellano K."/>
            <person name="Johnson R."/>
            <person name="Linton L."/>
            <person name="McEwan P."/>
            <person name="McKernan K."/>
            <person name="Talamas J."/>
            <person name="Tirrell A."/>
            <person name="Ye W."/>
            <person name="Zimmer A."/>
            <person name="Barber R.D."/>
            <person name="Cann I."/>
            <person name="Graham D.E."/>
            <person name="Grahame D.A."/>
            <person name="Guss A.M."/>
            <person name="Hedderich R."/>
            <person name="Ingram-Smith C."/>
            <person name="Kuettner H.C."/>
            <person name="Krzycki J.A."/>
            <person name="Leigh J.A."/>
            <person name="Li W."/>
            <person name="Liu J."/>
            <person name="Mukhopadhyay B."/>
            <person name="Reeve J.N."/>
            <person name="Smith K."/>
            <person name="Springer T.A."/>
            <person name="Umayam L.A."/>
            <person name="White O."/>
            <person name="White R.H."/>
            <person name="de Macario E.C."/>
            <person name="Ferry J.G."/>
            <person name="Jarrell K.F."/>
            <person name="Jing H."/>
            <person name="Macario A.J.L."/>
            <person name="Paulsen I.T."/>
            <person name="Pritchett M."/>
            <person name="Sowers K.R."/>
            <person name="Swanson R.V."/>
            <person name="Zinder S.H."/>
            <person name="Lander E."/>
            <person name="Metcalf W.W."/>
            <person name="Birren B."/>
        </authorList>
    </citation>
    <scope>NUCLEOTIDE SEQUENCE [LARGE SCALE GENOMIC DNA]</scope>
    <source>
        <strain>ATCC 35395 / DSM 2834 / JCM 12185 / C2A</strain>
    </source>
</reference>